<protein>
    <recommendedName>
        <fullName evidence="1">Imidazolonepropionase</fullName>
        <ecNumber evidence="1">3.5.2.7</ecNumber>
    </recommendedName>
    <alternativeName>
        <fullName evidence="1">Imidazolone-5-propionate hydrolase</fullName>
    </alternativeName>
</protein>
<dbReference type="EC" id="3.5.2.7" evidence="1"/>
<dbReference type="EMBL" id="CP000158">
    <property type="protein sequence ID" value="ABI76937.1"/>
    <property type="molecule type" value="Genomic_DNA"/>
</dbReference>
<dbReference type="RefSeq" id="WP_011647388.1">
    <property type="nucleotide sequence ID" value="NC_008358.1"/>
</dbReference>
<dbReference type="SMR" id="Q0BZK3"/>
<dbReference type="STRING" id="228405.HNE_2395"/>
<dbReference type="KEGG" id="hne:HNE_2395"/>
<dbReference type="eggNOG" id="COG1228">
    <property type="taxonomic scope" value="Bacteria"/>
</dbReference>
<dbReference type="HOGENOM" id="CLU_041647_0_0_5"/>
<dbReference type="UniPathway" id="UPA00379">
    <property type="reaction ID" value="UER00551"/>
</dbReference>
<dbReference type="Proteomes" id="UP000001959">
    <property type="component" value="Chromosome"/>
</dbReference>
<dbReference type="GO" id="GO:0005737">
    <property type="term" value="C:cytoplasm"/>
    <property type="evidence" value="ECO:0007669"/>
    <property type="project" value="UniProtKB-SubCell"/>
</dbReference>
<dbReference type="GO" id="GO:0050480">
    <property type="term" value="F:imidazolonepropionase activity"/>
    <property type="evidence" value="ECO:0007669"/>
    <property type="project" value="UniProtKB-UniRule"/>
</dbReference>
<dbReference type="GO" id="GO:0005506">
    <property type="term" value="F:iron ion binding"/>
    <property type="evidence" value="ECO:0007669"/>
    <property type="project" value="UniProtKB-UniRule"/>
</dbReference>
<dbReference type="GO" id="GO:0008270">
    <property type="term" value="F:zinc ion binding"/>
    <property type="evidence" value="ECO:0007669"/>
    <property type="project" value="UniProtKB-UniRule"/>
</dbReference>
<dbReference type="GO" id="GO:0019556">
    <property type="term" value="P:L-histidine catabolic process to glutamate and formamide"/>
    <property type="evidence" value="ECO:0007669"/>
    <property type="project" value="UniProtKB-UniPathway"/>
</dbReference>
<dbReference type="GO" id="GO:0019557">
    <property type="term" value="P:L-histidine catabolic process to glutamate and formate"/>
    <property type="evidence" value="ECO:0007669"/>
    <property type="project" value="UniProtKB-UniPathway"/>
</dbReference>
<dbReference type="CDD" id="cd01296">
    <property type="entry name" value="Imidazolone-5PH"/>
    <property type="match status" value="1"/>
</dbReference>
<dbReference type="FunFam" id="3.20.20.140:FF:000007">
    <property type="entry name" value="Imidazolonepropionase"/>
    <property type="match status" value="1"/>
</dbReference>
<dbReference type="Gene3D" id="3.20.20.140">
    <property type="entry name" value="Metal-dependent hydrolases"/>
    <property type="match status" value="1"/>
</dbReference>
<dbReference type="Gene3D" id="2.30.40.10">
    <property type="entry name" value="Urease, subunit C, domain 1"/>
    <property type="match status" value="1"/>
</dbReference>
<dbReference type="HAMAP" id="MF_00372">
    <property type="entry name" value="HutI"/>
    <property type="match status" value="1"/>
</dbReference>
<dbReference type="InterPro" id="IPR006680">
    <property type="entry name" value="Amidohydro-rel"/>
</dbReference>
<dbReference type="InterPro" id="IPR005920">
    <property type="entry name" value="HutI"/>
</dbReference>
<dbReference type="InterPro" id="IPR011059">
    <property type="entry name" value="Metal-dep_hydrolase_composite"/>
</dbReference>
<dbReference type="InterPro" id="IPR032466">
    <property type="entry name" value="Metal_Hydrolase"/>
</dbReference>
<dbReference type="NCBIfam" id="TIGR01224">
    <property type="entry name" value="hutI"/>
    <property type="match status" value="1"/>
</dbReference>
<dbReference type="PANTHER" id="PTHR42752">
    <property type="entry name" value="IMIDAZOLONEPROPIONASE"/>
    <property type="match status" value="1"/>
</dbReference>
<dbReference type="PANTHER" id="PTHR42752:SF1">
    <property type="entry name" value="IMIDAZOLONEPROPIONASE-RELATED"/>
    <property type="match status" value="1"/>
</dbReference>
<dbReference type="Pfam" id="PF01979">
    <property type="entry name" value="Amidohydro_1"/>
    <property type="match status" value="1"/>
</dbReference>
<dbReference type="SUPFAM" id="SSF51338">
    <property type="entry name" value="Composite domain of metallo-dependent hydrolases"/>
    <property type="match status" value="1"/>
</dbReference>
<dbReference type="SUPFAM" id="SSF51556">
    <property type="entry name" value="Metallo-dependent hydrolases"/>
    <property type="match status" value="1"/>
</dbReference>
<keyword id="KW-0963">Cytoplasm</keyword>
<keyword id="KW-0369">Histidine metabolism</keyword>
<keyword id="KW-0378">Hydrolase</keyword>
<keyword id="KW-0408">Iron</keyword>
<keyword id="KW-0479">Metal-binding</keyword>
<keyword id="KW-1185">Reference proteome</keyword>
<keyword id="KW-0862">Zinc</keyword>
<proteinExistence type="inferred from homology"/>
<evidence type="ECO:0000255" key="1">
    <source>
        <dbReference type="HAMAP-Rule" id="MF_00372"/>
    </source>
</evidence>
<name>HUTI_HYPNA</name>
<sequence length="406" mass="43060">MQKKRIWTNARLATMAAGLPGLGIVEDGLIAAEGDRITFAGLASDFPYTEGPSTQGYEVTDCGGRWILPGLIDCHTHLVWAGSRADEFERRLAGASYEEIARSGGGIRSTVSAVRAASEAELVAESLPRLNALIGEGVTTIEIKSGYGLNIEDELKQLRAARALGEVRPIDVETTLLAAHTLPPEYEGRADAYIDLVCNEIIPAAAQAGLASAVDAFCETIGFTPEQTGRVLSAARHHGLAVKLHADQLSNLQGGALAARHNALSADHLEYLDEAGIAAMAQAGMVAVMLPGAYYVLRETHPPPLEGLRRAGVSLAISTDCNPGTSPLTSILLAMNMGATLFRMTVEECLLGTTRHAARALGLEKATGTLEAGKLCNLSIWDIDRPAELVNAMGLNPLHTRVWRGQ</sequence>
<accession>Q0BZK3</accession>
<organism>
    <name type="scientific">Hyphomonas neptunium (strain ATCC 15444)</name>
    <dbReference type="NCBI Taxonomy" id="228405"/>
    <lineage>
        <taxon>Bacteria</taxon>
        <taxon>Pseudomonadati</taxon>
        <taxon>Pseudomonadota</taxon>
        <taxon>Alphaproteobacteria</taxon>
        <taxon>Hyphomonadales</taxon>
        <taxon>Hyphomonadaceae</taxon>
        <taxon>Hyphomonas</taxon>
    </lineage>
</organism>
<gene>
    <name evidence="1" type="primary">hutI</name>
    <name type="ordered locus">HNE_2395</name>
</gene>
<comment type="function">
    <text evidence="1">Catalyzes the hydrolytic cleavage of the carbon-nitrogen bond in imidazolone-5-propanoate to yield N-formimidoyl-L-glutamate. It is the third step in the universal histidine degradation pathway.</text>
</comment>
<comment type="catalytic activity">
    <reaction evidence="1">
        <text>4-imidazolone-5-propanoate + H2O = N-formimidoyl-L-glutamate</text>
        <dbReference type="Rhea" id="RHEA:23660"/>
        <dbReference type="ChEBI" id="CHEBI:15377"/>
        <dbReference type="ChEBI" id="CHEBI:58928"/>
        <dbReference type="ChEBI" id="CHEBI:77893"/>
        <dbReference type="EC" id="3.5.2.7"/>
    </reaction>
</comment>
<comment type="cofactor">
    <cofactor evidence="1">
        <name>Zn(2+)</name>
        <dbReference type="ChEBI" id="CHEBI:29105"/>
    </cofactor>
    <cofactor evidence="1">
        <name>Fe(3+)</name>
        <dbReference type="ChEBI" id="CHEBI:29034"/>
    </cofactor>
    <text evidence="1">Binds 1 zinc or iron ion per subunit.</text>
</comment>
<comment type="pathway">
    <text evidence="1">Amino-acid degradation; L-histidine degradation into L-glutamate; N-formimidoyl-L-glutamate from L-histidine: step 3/3.</text>
</comment>
<comment type="subcellular location">
    <subcellularLocation>
        <location evidence="1">Cytoplasm</location>
    </subcellularLocation>
</comment>
<comment type="similarity">
    <text evidence="1">Belongs to the metallo-dependent hydrolases superfamily. HutI family.</text>
</comment>
<feature type="chain" id="PRO_0000306466" description="Imidazolonepropionase">
    <location>
        <begin position="1"/>
        <end position="406"/>
    </location>
</feature>
<feature type="binding site" evidence="1">
    <location>
        <position position="75"/>
    </location>
    <ligand>
        <name>Fe(3+)</name>
        <dbReference type="ChEBI" id="CHEBI:29034"/>
    </ligand>
</feature>
<feature type="binding site" evidence="1">
    <location>
        <position position="75"/>
    </location>
    <ligand>
        <name>Zn(2+)</name>
        <dbReference type="ChEBI" id="CHEBI:29105"/>
    </ligand>
</feature>
<feature type="binding site" evidence="1">
    <location>
        <position position="77"/>
    </location>
    <ligand>
        <name>Fe(3+)</name>
        <dbReference type="ChEBI" id="CHEBI:29034"/>
    </ligand>
</feature>
<feature type="binding site" evidence="1">
    <location>
        <position position="77"/>
    </location>
    <ligand>
        <name>Zn(2+)</name>
        <dbReference type="ChEBI" id="CHEBI:29105"/>
    </ligand>
</feature>
<feature type="binding site" evidence="1">
    <location>
        <position position="84"/>
    </location>
    <ligand>
        <name>4-imidazolone-5-propanoate</name>
        <dbReference type="ChEBI" id="CHEBI:77893"/>
    </ligand>
</feature>
<feature type="binding site" evidence="1">
    <location>
        <position position="147"/>
    </location>
    <ligand>
        <name>4-imidazolone-5-propanoate</name>
        <dbReference type="ChEBI" id="CHEBI:77893"/>
    </ligand>
</feature>
<feature type="binding site" evidence="1">
    <location>
        <position position="147"/>
    </location>
    <ligand>
        <name>N-formimidoyl-L-glutamate</name>
        <dbReference type="ChEBI" id="CHEBI:58928"/>
    </ligand>
</feature>
<feature type="binding site" evidence="1">
    <location>
        <position position="180"/>
    </location>
    <ligand>
        <name>4-imidazolone-5-propanoate</name>
        <dbReference type="ChEBI" id="CHEBI:77893"/>
    </ligand>
</feature>
<feature type="binding site" evidence="1">
    <location>
        <position position="245"/>
    </location>
    <ligand>
        <name>Fe(3+)</name>
        <dbReference type="ChEBI" id="CHEBI:29034"/>
    </ligand>
</feature>
<feature type="binding site" evidence="1">
    <location>
        <position position="245"/>
    </location>
    <ligand>
        <name>Zn(2+)</name>
        <dbReference type="ChEBI" id="CHEBI:29105"/>
    </ligand>
</feature>
<feature type="binding site" evidence="1">
    <location>
        <position position="248"/>
    </location>
    <ligand>
        <name>4-imidazolone-5-propanoate</name>
        <dbReference type="ChEBI" id="CHEBI:77893"/>
    </ligand>
</feature>
<feature type="binding site" evidence="1">
    <location>
        <position position="320"/>
    </location>
    <ligand>
        <name>Fe(3+)</name>
        <dbReference type="ChEBI" id="CHEBI:29034"/>
    </ligand>
</feature>
<feature type="binding site" evidence="1">
    <location>
        <position position="320"/>
    </location>
    <ligand>
        <name>Zn(2+)</name>
        <dbReference type="ChEBI" id="CHEBI:29105"/>
    </ligand>
</feature>
<feature type="binding site" evidence="1">
    <location>
        <position position="322"/>
    </location>
    <ligand>
        <name>N-formimidoyl-L-glutamate</name>
        <dbReference type="ChEBI" id="CHEBI:58928"/>
    </ligand>
</feature>
<feature type="binding site" evidence="1">
    <location>
        <position position="324"/>
    </location>
    <ligand>
        <name>N-formimidoyl-L-glutamate</name>
        <dbReference type="ChEBI" id="CHEBI:58928"/>
    </ligand>
</feature>
<feature type="binding site" evidence="1">
    <location>
        <position position="325"/>
    </location>
    <ligand>
        <name>4-imidazolone-5-propanoate</name>
        <dbReference type="ChEBI" id="CHEBI:77893"/>
    </ligand>
</feature>
<reference key="1">
    <citation type="journal article" date="2006" name="J. Bacteriol.">
        <title>Comparative genomic evidence for a close relationship between the dimorphic prosthecate bacteria Hyphomonas neptunium and Caulobacter crescentus.</title>
        <authorList>
            <person name="Badger J.H."/>
            <person name="Hoover T.R."/>
            <person name="Brun Y.V."/>
            <person name="Weiner R.M."/>
            <person name="Laub M.T."/>
            <person name="Alexandre G."/>
            <person name="Mrazek J."/>
            <person name="Ren Q."/>
            <person name="Paulsen I.T."/>
            <person name="Nelson K.E."/>
            <person name="Khouri H.M."/>
            <person name="Radune D."/>
            <person name="Sosa J."/>
            <person name="Dodson R.J."/>
            <person name="Sullivan S.A."/>
            <person name="Rosovitz M.J."/>
            <person name="Madupu R."/>
            <person name="Brinkac L.M."/>
            <person name="Durkin A.S."/>
            <person name="Daugherty S.C."/>
            <person name="Kothari S.P."/>
            <person name="Giglio M.G."/>
            <person name="Zhou L."/>
            <person name="Haft D.H."/>
            <person name="Selengut J.D."/>
            <person name="Davidsen T.M."/>
            <person name="Yang Q."/>
            <person name="Zafar N."/>
            <person name="Ward N.L."/>
        </authorList>
    </citation>
    <scope>NUCLEOTIDE SEQUENCE [LARGE SCALE GENOMIC DNA]</scope>
    <source>
        <strain>ATCC 15444</strain>
    </source>
</reference>